<proteinExistence type="inferred from homology"/>
<sequence>MVSNGHFAYAEDDPVASYEHGVQVVDEDKEFNPNLSKYLAYEGVTPAGFNYHLISVFGSQSTGKSTLLNYLFGTHFSVMSETERRQTTKGIWMSKNKRQDCERENSLPHLQNNRMADNILVMDVEGTDGRERGEDQDFERKSALFALATSEVLIVNIWEHQVGLYQGANMGLLKTVFEVNMQLFLKDKKSTPRSLLFFVIRDFLGTTPLQNLQNTLMQDLQRIWTSLSKPPGLENSTIEDYFDFEFAALPHKNFQTDKFVAEVKKLSMRFREGHRDPSKGNKTEGGIFLSEYHRRIPADGFAVYAEGIWDQIVNNKDLDLPTQQELLAQFRCDEISREVLVAFDEAVVPFETKQAEAAQSGNPEVFAGLGPAMKNARVKTLSAFETEASRYHKRVFQMKRAELEDKMDTRLKVLFSGQLTAAHKSGIAQFSDAVSAAVKAGQKKGASYDFADIVNKEKRIALERFEDDAKATVIEGACWSNYTQELALYQKDLEKISAQLRKDEMRRLATRVERWVRSRLGESVGLEFNALGSGRGGSGAPETGDKPSEDTIWDRIWSIFVATVLEAEQRFTERASSFDASLEEVDVGLWRLRRKAWGVLRSKIDEEMMEGNLLLKLRENFEDKFRYDSAGVPRIWRPTDDIEGLYTKARESTLTLIPLLSRFRLQETNATPQLDRWVGYTPSAATPADEEDLVPIGGVDDDGKSLEEEMTMLSETKRQDLTVRFKKAADGVYVEAKRSAIGGMTQIPVYFYILLLALGWNEIIAVLRNPVYFFMLFLCSVAAYIIYQLNLWGPMVKMAEAASHQAVEEGKKRLRDLLEPSDIGHHGMKYKNGTEQYEMSHVRSGRNATKINERDDDDEVEGEETW</sequence>
<dbReference type="EC" id="3.6.5.-" evidence="1"/>
<dbReference type="EMBL" id="GG704915">
    <property type="protein sequence ID" value="EAS27787.1"/>
    <property type="molecule type" value="Genomic_DNA"/>
</dbReference>
<dbReference type="RefSeq" id="XP_001239370.1">
    <property type="nucleotide sequence ID" value="XM_001239369.2"/>
</dbReference>
<dbReference type="SMR" id="Q1DL22"/>
<dbReference type="FunCoup" id="Q1DL22">
    <property type="interactions" value="62"/>
</dbReference>
<dbReference type="STRING" id="246410.Q1DL22"/>
<dbReference type="GeneID" id="4558309"/>
<dbReference type="KEGG" id="cim:CIMG_08991"/>
<dbReference type="VEuPathDB" id="FungiDB:CIMG_08991"/>
<dbReference type="InParanoid" id="Q1DL22"/>
<dbReference type="OMA" id="PIIKMTE"/>
<dbReference type="OrthoDB" id="1597724at2759"/>
<dbReference type="Proteomes" id="UP000001261">
    <property type="component" value="Unassembled WGS sequence"/>
</dbReference>
<dbReference type="GO" id="GO:0005789">
    <property type="term" value="C:endoplasmic reticulum membrane"/>
    <property type="evidence" value="ECO:0007669"/>
    <property type="project" value="UniProtKB-SubCell"/>
</dbReference>
<dbReference type="GO" id="GO:0005525">
    <property type="term" value="F:GTP binding"/>
    <property type="evidence" value="ECO:0007669"/>
    <property type="project" value="UniProtKB-UniRule"/>
</dbReference>
<dbReference type="GO" id="GO:0003924">
    <property type="term" value="F:GTPase activity"/>
    <property type="evidence" value="ECO:0007669"/>
    <property type="project" value="UniProtKB-UniRule"/>
</dbReference>
<dbReference type="GO" id="GO:0016320">
    <property type="term" value="P:endoplasmic reticulum membrane fusion"/>
    <property type="evidence" value="ECO:0007669"/>
    <property type="project" value="TreeGrafter"/>
</dbReference>
<dbReference type="CDD" id="cd01851">
    <property type="entry name" value="GBP"/>
    <property type="match status" value="1"/>
</dbReference>
<dbReference type="FunFam" id="3.40.50.300:FF:000727">
    <property type="entry name" value="Protein SEY1 homolog"/>
    <property type="match status" value="1"/>
</dbReference>
<dbReference type="Gene3D" id="3.40.50.300">
    <property type="entry name" value="P-loop containing nucleotide triphosphate hydrolases"/>
    <property type="match status" value="1"/>
</dbReference>
<dbReference type="HAMAP" id="MF_03109">
    <property type="entry name" value="Sey1"/>
    <property type="match status" value="1"/>
</dbReference>
<dbReference type="InterPro" id="IPR030386">
    <property type="entry name" value="G_GB1_RHD3_dom"/>
</dbReference>
<dbReference type="InterPro" id="IPR027417">
    <property type="entry name" value="P-loop_NTPase"/>
</dbReference>
<dbReference type="InterPro" id="IPR008803">
    <property type="entry name" value="RHD3/Sey1"/>
</dbReference>
<dbReference type="InterPro" id="IPR046758">
    <property type="entry name" value="Sey1/RHD3-like_3HB"/>
</dbReference>
<dbReference type="PANTHER" id="PTHR45923">
    <property type="entry name" value="PROTEIN SEY1"/>
    <property type="match status" value="1"/>
</dbReference>
<dbReference type="PANTHER" id="PTHR45923:SF2">
    <property type="entry name" value="PROTEIN SEY1"/>
    <property type="match status" value="1"/>
</dbReference>
<dbReference type="Pfam" id="PF05879">
    <property type="entry name" value="RHD3_GTPase"/>
    <property type="match status" value="1"/>
</dbReference>
<dbReference type="Pfam" id="PF20428">
    <property type="entry name" value="Sey1_3HB"/>
    <property type="match status" value="1"/>
</dbReference>
<dbReference type="SUPFAM" id="SSF52540">
    <property type="entry name" value="P-loop containing nucleoside triphosphate hydrolases"/>
    <property type="match status" value="1"/>
</dbReference>
<dbReference type="PROSITE" id="PS51715">
    <property type="entry name" value="G_GB1_RHD3"/>
    <property type="match status" value="1"/>
</dbReference>
<gene>
    <name evidence="1" type="primary">SEY1</name>
    <name type="ORF">CIMG_08991</name>
</gene>
<comment type="function">
    <text evidence="1">Cooperates with the reticulon proteins and tubule-shaping DP1 family proteins to generate and maintain the structure of the tubular endoplasmic reticulum network. Has GTPase activity, which is required for its function in ER organization.</text>
</comment>
<comment type="subcellular location">
    <subcellularLocation>
        <location evidence="1">Endoplasmic reticulum membrane</location>
        <topology evidence="1">Multi-pass membrane protein</topology>
    </subcellularLocation>
    <text evidence="1">Enriched in the cortical ER. Concentrated in punctae along the ER tubules.</text>
</comment>
<comment type="similarity">
    <text evidence="2">Belongs to the TRAFAC class dynamin-like GTPase superfamily. GB1/RHD3 GTPase family. RHD3 subfamily.</text>
</comment>
<accession>Q1DL22</accession>
<accession>A0A0D6K9M2</accession>
<accession>J3K1Z5</accession>
<protein>
    <recommendedName>
        <fullName evidence="1">Protein SEY1</fullName>
        <ecNumber evidence="1">3.6.5.-</ecNumber>
    </recommendedName>
</protein>
<organism>
    <name type="scientific">Coccidioides immitis (strain RS)</name>
    <name type="common">Valley fever fungus</name>
    <dbReference type="NCBI Taxonomy" id="246410"/>
    <lineage>
        <taxon>Eukaryota</taxon>
        <taxon>Fungi</taxon>
        <taxon>Dikarya</taxon>
        <taxon>Ascomycota</taxon>
        <taxon>Pezizomycotina</taxon>
        <taxon>Eurotiomycetes</taxon>
        <taxon>Eurotiomycetidae</taxon>
        <taxon>Onygenales</taxon>
        <taxon>Onygenaceae</taxon>
        <taxon>Coccidioides</taxon>
    </lineage>
</organism>
<evidence type="ECO:0000255" key="1">
    <source>
        <dbReference type="HAMAP-Rule" id="MF_03109"/>
    </source>
</evidence>
<evidence type="ECO:0000255" key="2">
    <source>
        <dbReference type="PROSITE-ProRule" id="PRU01052"/>
    </source>
</evidence>
<evidence type="ECO:0000256" key="3">
    <source>
        <dbReference type="SAM" id="MobiDB-lite"/>
    </source>
</evidence>
<feature type="chain" id="PRO_0000384981" description="Protein SEY1">
    <location>
        <begin position="1"/>
        <end position="866"/>
    </location>
</feature>
<feature type="topological domain" description="Cytoplasmic" evidence="1">
    <location>
        <begin position="1"/>
        <end position="746"/>
    </location>
</feature>
<feature type="transmembrane region" description="Helical" evidence="1">
    <location>
        <begin position="747"/>
        <end position="767"/>
    </location>
</feature>
<feature type="topological domain" description="Lumenal" evidence="1">
    <location>
        <begin position="768"/>
        <end position="770"/>
    </location>
</feature>
<feature type="transmembrane region" description="Helical" evidence="1">
    <location>
        <begin position="771"/>
        <end position="791"/>
    </location>
</feature>
<feature type="topological domain" description="Cytoplasmic" evidence="1">
    <location>
        <begin position="792"/>
        <end position="866"/>
    </location>
</feature>
<feature type="domain" description="GB1/RHD3-type G" evidence="2">
    <location>
        <begin position="48"/>
        <end position="305"/>
    </location>
</feature>
<feature type="region of interest" description="Disordered" evidence="3">
    <location>
        <begin position="840"/>
        <end position="866"/>
    </location>
</feature>
<feature type="coiled-coil region" evidence="1">
    <location>
        <begin position="480"/>
        <end position="506"/>
    </location>
</feature>
<feature type="compositionally biased region" description="Acidic residues" evidence="3">
    <location>
        <begin position="854"/>
        <end position="866"/>
    </location>
</feature>
<feature type="binding site" evidence="1">
    <location>
        <begin position="58"/>
        <end position="65"/>
    </location>
    <ligand>
        <name>GTP</name>
        <dbReference type="ChEBI" id="CHEBI:37565"/>
    </ligand>
</feature>
<keyword id="KW-0175">Coiled coil</keyword>
<keyword id="KW-0256">Endoplasmic reticulum</keyword>
<keyword id="KW-0342">GTP-binding</keyword>
<keyword id="KW-0378">Hydrolase</keyword>
<keyword id="KW-0472">Membrane</keyword>
<keyword id="KW-0547">Nucleotide-binding</keyword>
<keyword id="KW-1185">Reference proteome</keyword>
<keyword id="KW-0812">Transmembrane</keyword>
<keyword id="KW-1133">Transmembrane helix</keyword>
<reference key="1">
    <citation type="journal article" date="2009" name="Genome Res.">
        <title>Comparative genomic analyses of the human fungal pathogens Coccidioides and their relatives.</title>
        <authorList>
            <person name="Sharpton T.J."/>
            <person name="Stajich J.E."/>
            <person name="Rounsley S.D."/>
            <person name="Gardner M.J."/>
            <person name="Wortman J.R."/>
            <person name="Jordar V.S."/>
            <person name="Maiti R."/>
            <person name="Kodira C.D."/>
            <person name="Neafsey D.E."/>
            <person name="Zeng Q."/>
            <person name="Hung C.-Y."/>
            <person name="McMahan C."/>
            <person name="Muszewska A."/>
            <person name="Grynberg M."/>
            <person name="Mandel M.A."/>
            <person name="Kellner E.M."/>
            <person name="Barker B.M."/>
            <person name="Galgiani J.N."/>
            <person name="Orbach M.J."/>
            <person name="Kirkland T.N."/>
            <person name="Cole G.T."/>
            <person name="Henn M.R."/>
            <person name="Birren B.W."/>
            <person name="Taylor J.W."/>
        </authorList>
    </citation>
    <scope>NUCLEOTIDE SEQUENCE [LARGE SCALE GENOMIC DNA]</scope>
    <source>
        <strain>RS</strain>
    </source>
</reference>
<reference key="2">
    <citation type="journal article" date="2010" name="Genome Res.">
        <title>Population genomic sequencing of Coccidioides fungi reveals recent hybridization and transposon control.</title>
        <authorList>
            <person name="Neafsey D.E."/>
            <person name="Barker B.M."/>
            <person name="Sharpton T.J."/>
            <person name="Stajich J.E."/>
            <person name="Park D.J."/>
            <person name="Whiston E."/>
            <person name="Hung C.-Y."/>
            <person name="McMahan C."/>
            <person name="White J."/>
            <person name="Sykes S."/>
            <person name="Heiman D."/>
            <person name="Young S."/>
            <person name="Zeng Q."/>
            <person name="Abouelleil A."/>
            <person name="Aftuck L."/>
            <person name="Bessette D."/>
            <person name="Brown A."/>
            <person name="FitzGerald M."/>
            <person name="Lui A."/>
            <person name="Macdonald J.P."/>
            <person name="Priest M."/>
            <person name="Orbach M.J."/>
            <person name="Galgiani J.N."/>
            <person name="Kirkland T.N."/>
            <person name="Cole G.T."/>
            <person name="Birren B.W."/>
            <person name="Henn M.R."/>
            <person name="Taylor J.W."/>
            <person name="Rounsley S.D."/>
        </authorList>
    </citation>
    <scope>GENOME REANNOTATION</scope>
    <source>
        <strain>RS</strain>
    </source>
</reference>
<name>SEY1_COCIM</name>